<dbReference type="EMBL" id="CR936257">
    <property type="protein sequence ID" value="CAI49934.1"/>
    <property type="molecule type" value="Genomic_DNA"/>
</dbReference>
<dbReference type="RefSeq" id="WP_011323552.1">
    <property type="nucleotide sequence ID" value="NC_007426.1"/>
</dbReference>
<dbReference type="SMR" id="Q3IPL6"/>
<dbReference type="STRING" id="348780.NP_3686A"/>
<dbReference type="EnsemblBacteria" id="CAI49934">
    <property type="protein sequence ID" value="CAI49934"/>
    <property type="gene ID" value="NP_3686A"/>
</dbReference>
<dbReference type="GeneID" id="3703231"/>
<dbReference type="KEGG" id="nph:NP_3686A"/>
<dbReference type="eggNOG" id="arCOG01988">
    <property type="taxonomic scope" value="Archaea"/>
</dbReference>
<dbReference type="HOGENOM" id="CLU_165896_0_0_2"/>
<dbReference type="OrthoDB" id="84643at2157"/>
<dbReference type="Proteomes" id="UP000002698">
    <property type="component" value="Chromosome"/>
</dbReference>
<dbReference type="GO" id="GO:0003746">
    <property type="term" value="F:translation elongation factor activity"/>
    <property type="evidence" value="ECO:0007669"/>
    <property type="project" value="UniProtKB-UniRule"/>
</dbReference>
<dbReference type="CDD" id="cd00292">
    <property type="entry name" value="EF1B"/>
    <property type="match status" value="1"/>
</dbReference>
<dbReference type="Gene3D" id="3.30.70.60">
    <property type="match status" value="1"/>
</dbReference>
<dbReference type="HAMAP" id="MF_00043">
    <property type="entry name" value="EF1_beta"/>
    <property type="match status" value="1"/>
</dbReference>
<dbReference type="InterPro" id="IPR036219">
    <property type="entry name" value="eEF-1beta-like_sf"/>
</dbReference>
<dbReference type="InterPro" id="IPR014038">
    <property type="entry name" value="EF1B_bsu/dsu_GNE"/>
</dbReference>
<dbReference type="InterPro" id="IPR014717">
    <property type="entry name" value="Transl_elong_EF1B/ribsomal_bS6"/>
</dbReference>
<dbReference type="InterPro" id="IPR004542">
    <property type="entry name" value="Transl_elong_EF1B_B_arc"/>
</dbReference>
<dbReference type="NCBIfam" id="TIGR00489">
    <property type="entry name" value="aEF-1_beta"/>
    <property type="match status" value="1"/>
</dbReference>
<dbReference type="NCBIfam" id="NF001670">
    <property type="entry name" value="PRK00435.1"/>
    <property type="match status" value="1"/>
</dbReference>
<dbReference type="PANTHER" id="PTHR39647">
    <property type="entry name" value="ELONGATION FACTOR 1-BETA"/>
    <property type="match status" value="1"/>
</dbReference>
<dbReference type="PANTHER" id="PTHR39647:SF1">
    <property type="entry name" value="ELONGATION FACTOR 1-BETA"/>
    <property type="match status" value="1"/>
</dbReference>
<dbReference type="Pfam" id="PF00736">
    <property type="entry name" value="EF1_GNE"/>
    <property type="match status" value="1"/>
</dbReference>
<dbReference type="PIRSF" id="PIRSF006521">
    <property type="entry name" value="Transl_elong_EF1B_B_arc"/>
    <property type="match status" value="1"/>
</dbReference>
<dbReference type="SMART" id="SM00888">
    <property type="entry name" value="EF1_GNE"/>
    <property type="match status" value="1"/>
</dbReference>
<dbReference type="SUPFAM" id="SSF54984">
    <property type="entry name" value="eEF-1beta-like"/>
    <property type="match status" value="1"/>
</dbReference>
<reference key="1">
    <citation type="journal article" date="2005" name="Genome Res.">
        <title>Living with two extremes: conclusions from the genome sequence of Natronomonas pharaonis.</title>
        <authorList>
            <person name="Falb M."/>
            <person name="Pfeiffer F."/>
            <person name="Palm P."/>
            <person name="Rodewald K."/>
            <person name="Hickmann V."/>
            <person name="Tittor J."/>
            <person name="Oesterhelt D."/>
        </authorList>
    </citation>
    <scope>NUCLEOTIDE SEQUENCE [LARGE SCALE GENOMIC DNA]</scope>
    <source>
        <strain>ATCC 35678 / DSM 2160 / CIP 103997 / JCM 8858 / NBRC 14720 / NCIMB 2260 / Gabara</strain>
    </source>
</reference>
<evidence type="ECO:0000255" key="1">
    <source>
        <dbReference type="HAMAP-Rule" id="MF_00043"/>
    </source>
</evidence>
<sequence>MGKVAAKMKVMPQSPEVDLDELQDRLENSLPEGAKISRVDREDVAFGLIALFPTVIIPDEAGGTDTVEDAFSGVDGVESVDVDEVGRI</sequence>
<keyword id="KW-0251">Elongation factor</keyword>
<keyword id="KW-0648">Protein biosynthesis</keyword>
<keyword id="KW-1185">Reference proteome</keyword>
<feature type="chain" id="PRO_1000006619" description="Elongation factor 1-beta">
    <location>
        <begin position="1"/>
        <end position="88"/>
    </location>
</feature>
<proteinExistence type="inferred from homology"/>
<accession>Q3IPL6</accession>
<protein>
    <recommendedName>
        <fullName evidence="1">Elongation factor 1-beta</fullName>
        <shortName evidence="1">EF-1-beta</shortName>
    </recommendedName>
    <alternativeName>
        <fullName evidence="1">aEF-1beta</fullName>
    </alternativeName>
</protein>
<comment type="function">
    <text evidence="1">Promotes the exchange of GDP for GTP in EF-1-alpha/GDP, thus allowing the regeneration of EF-1-alpha/GTP that could then be used to form the ternary complex EF-1-alpha/GTP/AAtRNA.</text>
</comment>
<comment type="similarity">
    <text evidence="1">Belongs to the EF-1-beta/EF-1-delta family.</text>
</comment>
<organism>
    <name type="scientific">Natronomonas pharaonis (strain ATCC 35678 / DSM 2160 / CIP 103997 / JCM 8858 / NBRC 14720 / NCIMB 2260 / Gabara)</name>
    <name type="common">Halobacterium pharaonis</name>
    <dbReference type="NCBI Taxonomy" id="348780"/>
    <lineage>
        <taxon>Archaea</taxon>
        <taxon>Methanobacteriati</taxon>
        <taxon>Methanobacteriota</taxon>
        <taxon>Stenosarchaea group</taxon>
        <taxon>Halobacteria</taxon>
        <taxon>Halobacteriales</taxon>
        <taxon>Haloarculaceae</taxon>
        <taxon>Natronomonas</taxon>
    </lineage>
</organism>
<name>EF1B_NATPD</name>
<gene>
    <name evidence="1" type="primary">ef1b</name>
    <name type="ordered locus">NP_3686A</name>
</gene>